<feature type="chain" id="PRO_0000300415" description="DNA-directed RNA polymerase subunit beta">
    <location>
        <begin position="1"/>
        <end position="1190"/>
    </location>
</feature>
<reference key="1">
    <citation type="journal article" date="2007" name="PLoS ONE">
        <title>A glimpse of streptococcal toxic shock syndrome from comparative genomics of S. suis 2 Chinese isolates.</title>
        <authorList>
            <person name="Chen C."/>
            <person name="Tang J."/>
            <person name="Dong W."/>
            <person name="Wang C."/>
            <person name="Feng Y."/>
            <person name="Wang J."/>
            <person name="Zheng F."/>
            <person name="Pan X."/>
            <person name="Liu D."/>
            <person name="Li M."/>
            <person name="Song Y."/>
            <person name="Zhu X."/>
            <person name="Sun H."/>
            <person name="Feng T."/>
            <person name="Guo Z."/>
            <person name="Ju A."/>
            <person name="Ge J."/>
            <person name="Dong Y."/>
            <person name="Sun W."/>
            <person name="Jiang Y."/>
            <person name="Wang J."/>
            <person name="Yan J."/>
            <person name="Yang H."/>
            <person name="Wang X."/>
            <person name="Gao G.F."/>
            <person name="Yang R."/>
            <person name="Wang J."/>
            <person name="Yu J."/>
        </authorList>
    </citation>
    <scope>NUCLEOTIDE SEQUENCE [LARGE SCALE GENOMIC DNA]</scope>
    <source>
        <strain>05ZYH33</strain>
    </source>
</reference>
<evidence type="ECO:0000255" key="1">
    <source>
        <dbReference type="HAMAP-Rule" id="MF_01321"/>
    </source>
</evidence>
<dbReference type="EC" id="2.7.7.6" evidence="1"/>
<dbReference type="EMBL" id="CP000407">
    <property type="protein sequence ID" value="ABP89091.1"/>
    <property type="molecule type" value="Genomic_DNA"/>
</dbReference>
<dbReference type="SMR" id="A4VSK2"/>
<dbReference type="STRING" id="391295.SSU05_0121"/>
<dbReference type="KEGG" id="ssu:SSU05_0121"/>
<dbReference type="eggNOG" id="COG0085">
    <property type="taxonomic scope" value="Bacteria"/>
</dbReference>
<dbReference type="HOGENOM" id="CLU_000524_4_1_9"/>
<dbReference type="GO" id="GO:0000428">
    <property type="term" value="C:DNA-directed RNA polymerase complex"/>
    <property type="evidence" value="ECO:0007669"/>
    <property type="project" value="UniProtKB-KW"/>
</dbReference>
<dbReference type="GO" id="GO:0003677">
    <property type="term" value="F:DNA binding"/>
    <property type="evidence" value="ECO:0007669"/>
    <property type="project" value="UniProtKB-UniRule"/>
</dbReference>
<dbReference type="GO" id="GO:0003899">
    <property type="term" value="F:DNA-directed RNA polymerase activity"/>
    <property type="evidence" value="ECO:0007669"/>
    <property type="project" value="UniProtKB-UniRule"/>
</dbReference>
<dbReference type="GO" id="GO:0032549">
    <property type="term" value="F:ribonucleoside binding"/>
    <property type="evidence" value="ECO:0007669"/>
    <property type="project" value="InterPro"/>
</dbReference>
<dbReference type="GO" id="GO:0006351">
    <property type="term" value="P:DNA-templated transcription"/>
    <property type="evidence" value="ECO:0007669"/>
    <property type="project" value="UniProtKB-UniRule"/>
</dbReference>
<dbReference type="CDD" id="cd00653">
    <property type="entry name" value="RNA_pol_B_RPB2"/>
    <property type="match status" value="1"/>
</dbReference>
<dbReference type="Gene3D" id="2.40.50.100">
    <property type="match status" value="1"/>
</dbReference>
<dbReference type="Gene3D" id="2.40.50.150">
    <property type="match status" value="1"/>
</dbReference>
<dbReference type="Gene3D" id="3.90.1100.10">
    <property type="match status" value="3"/>
</dbReference>
<dbReference type="Gene3D" id="2.40.270.10">
    <property type="entry name" value="DNA-directed RNA polymerase, subunit 2, domain 6"/>
    <property type="match status" value="1"/>
</dbReference>
<dbReference type="Gene3D" id="3.90.1800.10">
    <property type="entry name" value="RNA polymerase alpha subunit dimerisation domain"/>
    <property type="match status" value="1"/>
</dbReference>
<dbReference type="Gene3D" id="3.90.1110.10">
    <property type="entry name" value="RNA polymerase Rpb2, domain 2"/>
    <property type="match status" value="1"/>
</dbReference>
<dbReference type="HAMAP" id="MF_01321">
    <property type="entry name" value="RNApol_bact_RpoB"/>
    <property type="match status" value="1"/>
</dbReference>
<dbReference type="InterPro" id="IPR019462">
    <property type="entry name" value="DNA-dir_RNA_pol_bsu_external_1"/>
</dbReference>
<dbReference type="InterPro" id="IPR015712">
    <property type="entry name" value="DNA-dir_RNA_pol_su2"/>
</dbReference>
<dbReference type="InterPro" id="IPR007120">
    <property type="entry name" value="DNA-dir_RNAP_su2_dom"/>
</dbReference>
<dbReference type="InterPro" id="IPR037033">
    <property type="entry name" value="DNA-dir_RNAP_su2_hyb_sf"/>
</dbReference>
<dbReference type="InterPro" id="IPR010243">
    <property type="entry name" value="RNA_pol_bsu_bac"/>
</dbReference>
<dbReference type="InterPro" id="IPR007121">
    <property type="entry name" value="RNA_pol_bsu_CS"/>
</dbReference>
<dbReference type="InterPro" id="IPR007644">
    <property type="entry name" value="RNA_pol_bsu_protrusion"/>
</dbReference>
<dbReference type="InterPro" id="IPR007642">
    <property type="entry name" value="RNA_pol_Rpb2_2"/>
</dbReference>
<dbReference type="InterPro" id="IPR037034">
    <property type="entry name" value="RNA_pol_Rpb2_2_sf"/>
</dbReference>
<dbReference type="InterPro" id="IPR007645">
    <property type="entry name" value="RNA_pol_Rpb2_3"/>
</dbReference>
<dbReference type="InterPro" id="IPR007641">
    <property type="entry name" value="RNA_pol_Rpb2_7"/>
</dbReference>
<dbReference type="InterPro" id="IPR014724">
    <property type="entry name" value="RNA_pol_RPB2_OB-fold"/>
</dbReference>
<dbReference type="NCBIfam" id="NF001616">
    <property type="entry name" value="PRK00405.1"/>
    <property type="match status" value="1"/>
</dbReference>
<dbReference type="NCBIfam" id="TIGR02013">
    <property type="entry name" value="rpoB"/>
    <property type="match status" value="1"/>
</dbReference>
<dbReference type="PANTHER" id="PTHR20856">
    <property type="entry name" value="DNA-DIRECTED RNA POLYMERASE I SUBUNIT 2"/>
    <property type="match status" value="1"/>
</dbReference>
<dbReference type="Pfam" id="PF04563">
    <property type="entry name" value="RNA_pol_Rpb2_1"/>
    <property type="match status" value="1"/>
</dbReference>
<dbReference type="Pfam" id="PF04561">
    <property type="entry name" value="RNA_pol_Rpb2_2"/>
    <property type="match status" value="2"/>
</dbReference>
<dbReference type="Pfam" id="PF04565">
    <property type="entry name" value="RNA_pol_Rpb2_3"/>
    <property type="match status" value="1"/>
</dbReference>
<dbReference type="Pfam" id="PF10385">
    <property type="entry name" value="RNA_pol_Rpb2_45"/>
    <property type="match status" value="1"/>
</dbReference>
<dbReference type="Pfam" id="PF00562">
    <property type="entry name" value="RNA_pol_Rpb2_6"/>
    <property type="match status" value="1"/>
</dbReference>
<dbReference type="Pfam" id="PF04560">
    <property type="entry name" value="RNA_pol_Rpb2_7"/>
    <property type="match status" value="1"/>
</dbReference>
<dbReference type="SUPFAM" id="SSF64484">
    <property type="entry name" value="beta and beta-prime subunits of DNA dependent RNA-polymerase"/>
    <property type="match status" value="1"/>
</dbReference>
<dbReference type="PROSITE" id="PS01166">
    <property type="entry name" value="RNA_POL_BETA"/>
    <property type="match status" value="1"/>
</dbReference>
<name>RPOB_STRSY</name>
<sequence>MAGHEVQYGKHRTRRSFSRIKEVLDLPNLIEIQTDSFQDFLDYGLKEVFEDVLPVSNFTDTMELEFVGYELKEPKYTLEEARAHDANYSAPIYVTFRLVNKETGEIKTQEVFFGEFPIMTEMGTFIINGAERIIVSQLVRSPGVYFNDKVDKNGKVGYGSTVIPNRGAWLELETDSKDIAYTRIDRTRKIPFTTLVRALGFSGDDEIFDIFGDSELVRNTIEKDIHKNPADSRTDEALKEIYERLRPGEPKTAESSRSLLTARFFDPRRYDLAPVGRYKINKKLNLRTRLLNQTLAEHVINGETGEIVLEAGTVLSRDVLEKVEAQFDELNLVEYIPNDNAVLLEPVLLQKFKIVAPKDPERVVTVIGNANPAENVRTVTPADILAEMSYFLNLAEGLGRVDDIDHLGNRRIRAVGELLANQVRIGLTRMERNLRERMSVQDNEVLTPQQIINIRPVTAAIKEFFGSSQLSQFMDQHNPLSELSHKRRLSALGPGGLTRDRAGYEVRDVHYTHYGRMCPIETPEGPNIGLINNLSSYGHLNKYGFIQTPYRKIDRATGTVTNEIVWLTADEEDAYIVAQSTSPLDENNRFVDKIVMGRHQGNNQEFPADSADFMDVSPKQVVAVATACIPFLENDDSNRALMGANMQRQAVPLIDPKAPYVGTGMEYQAAHDSGAAIIAQHDGKVVYADADKVEVRREDGSLDVYHISKFRRSNSGTAYNQRTLVKLGDIVEKGDFIADGPSMENGEMALGQNPIVAYMTWEGYNFEDAVIMSERLVKDDVYTSVHLEEYESETRDTKLGPEEITREIPNVGEDALRNLDEMGIIRIGAEVKEGDILVGKVTPKGEKDLSAEERLLHAIFGDKSREVRDTSLRVPHGADGVVRDVKIFTRANGDELQSGVNMLVRVYIAQKRKIKVGDKMAGRHGNKGVVSRIVPVEDMPYLPDGTPVDIMLNPLGVPSRMNIGQVMELHLGMAARNLGIHIATPVFDGASSEDLWSTVKEAGMDSDAKTILYDGRTGEPFDNRVSVGVMYMIKLHHMVDDKLHARSVGPYSLVTQQPLGGKAQFGGQRFGEMEVWALEAYGASNVLQEILTYKSDDVTGRLKAYEAITKGKPIPKPGVPESFRVLVKELQSLGLDMRVLDEDNNEVELRDLDEGEDDDIIHVDDLEKARAKAAADAAAAFAAEEAEGKE</sequence>
<comment type="function">
    <text evidence="1">DNA-dependent RNA polymerase catalyzes the transcription of DNA into RNA using the four ribonucleoside triphosphates as substrates.</text>
</comment>
<comment type="catalytic activity">
    <reaction evidence="1">
        <text>RNA(n) + a ribonucleoside 5'-triphosphate = RNA(n+1) + diphosphate</text>
        <dbReference type="Rhea" id="RHEA:21248"/>
        <dbReference type="Rhea" id="RHEA-COMP:14527"/>
        <dbReference type="Rhea" id="RHEA-COMP:17342"/>
        <dbReference type="ChEBI" id="CHEBI:33019"/>
        <dbReference type="ChEBI" id="CHEBI:61557"/>
        <dbReference type="ChEBI" id="CHEBI:140395"/>
        <dbReference type="EC" id="2.7.7.6"/>
    </reaction>
</comment>
<comment type="subunit">
    <text evidence="1">The RNAP catalytic core consists of 2 alpha, 1 beta, 1 beta' and 1 omega subunit. When a sigma factor is associated with the core the holoenzyme is formed, which can initiate transcription.</text>
</comment>
<comment type="similarity">
    <text evidence="1">Belongs to the RNA polymerase beta chain family.</text>
</comment>
<accession>A4VSK2</accession>
<proteinExistence type="inferred from homology"/>
<gene>
    <name evidence="1" type="primary">rpoB</name>
    <name type="ordered locus">SSU05_0121</name>
</gene>
<keyword id="KW-0240">DNA-directed RNA polymerase</keyword>
<keyword id="KW-0548">Nucleotidyltransferase</keyword>
<keyword id="KW-0804">Transcription</keyword>
<keyword id="KW-0808">Transferase</keyword>
<organism>
    <name type="scientific">Streptococcus suis (strain 05ZYH33)</name>
    <dbReference type="NCBI Taxonomy" id="391295"/>
    <lineage>
        <taxon>Bacteria</taxon>
        <taxon>Bacillati</taxon>
        <taxon>Bacillota</taxon>
        <taxon>Bacilli</taxon>
        <taxon>Lactobacillales</taxon>
        <taxon>Streptococcaceae</taxon>
        <taxon>Streptococcus</taxon>
    </lineage>
</organism>
<protein>
    <recommendedName>
        <fullName evidence="1">DNA-directed RNA polymerase subunit beta</fullName>
        <shortName evidence="1">RNAP subunit beta</shortName>
        <ecNumber evidence="1">2.7.7.6</ecNumber>
    </recommendedName>
    <alternativeName>
        <fullName evidence="1">RNA polymerase subunit beta</fullName>
    </alternativeName>
    <alternativeName>
        <fullName evidence="1">Transcriptase subunit beta</fullName>
    </alternativeName>
</protein>